<comment type="function">
    <text evidence="1">Catalyzes the formation of sulfite from adenosine 5'-phosphosulfate (APS) using thioredoxin as an electron donor.</text>
</comment>
<comment type="catalytic activity">
    <reaction evidence="1">
        <text>[thioredoxin]-disulfide + sulfite + AMP + 2 H(+) = adenosine 5'-phosphosulfate + [thioredoxin]-dithiol</text>
        <dbReference type="Rhea" id="RHEA:21976"/>
        <dbReference type="Rhea" id="RHEA-COMP:10698"/>
        <dbReference type="Rhea" id="RHEA-COMP:10700"/>
        <dbReference type="ChEBI" id="CHEBI:15378"/>
        <dbReference type="ChEBI" id="CHEBI:17359"/>
        <dbReference type="ChEBI" id="CHEBI:29950"/>
        <dbReference type="ChEBI" id="CHEBI:50058"/>
        <dbReference type="ChEBI" id="CHEBI:58243"/>
        <dbReference type="ChEBI" id="CHEBI:456215"/>
        <dbReference type="EC" id="1.8.4.10"/>
    </reaction>
</comment>
<comment type="cofactor">
    <cofactor evidence="1">
        <name>[4Fe-4S] cluster</name>
        <dbReference type="ChEBI" id="CHEBI:49883"/>
    </cofactor>
    <text evidence="1">Binds 1 [4Fe-4S] cluster per subunit.</text>
</comment>
<comment type="pathway">
    <text evidence="1">Sulfur metabolism; hydrogen sulfide biosynthesis; sulfite from sulfate.</text>
</comment>
<comment type="subcellular location">
    <subcellularLocation>
        <location evidence="1">Cytoplasm</location>
    </subcellularLocation>
</comment>
<comment type="similarity">
    <text evidence="1">Belongs to the PAPS reductase family. CysH subfamily.</text>
</comment>
<reference key="1">
    <citation type="journal article" date="2003" name="Nature">
        <title>Genome sequence of Bacillus cereus and comparative analysis with Bacillus anthracis.</title>
        <authorList>
            <person name="Ivanova N."/>
            <person name="Sorokin A."/>
            <person name="Anderson I."/>
            <person name="Galleron N."/>
            <person name="Candelon B."/>
            <person name="Kapatral V."/>
            <person name="Bhattacharyya A."/>
            <person name="Reznik G."/>
            <person name="Mikhailova N."/>
            <person name="Lapidus A."/>
            <person name="Chu L."/>
            <person name="Mazur M."/>
            <person name="Goltsman E."/>
            <person name="Larsen N."/>
            <person name="D'Souza M."/>
            <person name="Walunas T."/>
            <person name="Grechkin Y."/>
            <person name="Pusch G."/>
            <person name="Haselkorn R."/>
            <person name="Fonstein M."/>
            <person name="Ehrlich S.D."/>
            <person name="Overbeek R."/>
            <person name="Kyrpides N.C."/>
        </authorList>
    </citation>
    <scope>NUCLEOTIDE SEQUENCE [LARGE SCALE GENOMIC DNA]</scope>
    <source>
        <strain>ATCC 14579 / DSM 31 / CCUG 7414 / JCM 2152 / NBRC 15305 / NCIMB 9373 / NCTC 2599 / NRRL B-3711</strain>
    </source>
</reference>
<dbReference type="EC" id="1.8.4.10" evidence="1"/>
<dbReference type="EMBL" id="AE016877">
    <property type="protein sequence ID" value="AAP08402.1"/>
    <property type="molecule type" value="Genomic_DNA"/>
</dbReference>
<dbReference type="RefSeq" id="NP_831201.1">
    <property type="nucleotide sequence ID" value="NC_004722.1"/>
</dbReference>
<dbReference type="RefSeq" id="WP_000959022.1">
    <property type="nucleotide sequence ID" value="NZ_CP138336.1"/>
</dbReference>
<dbReference type="SMR" id="Q81FZ1"/>
<dbReference type="STRING" id="226900.BC_1421"/>
<dbReference type="KEGG" id="bce:BC1421"/>
<dbReference type="PATRIC" id="fig|226900.8.peg.1398"/>
<dbReference type="HOGENOM" id="CLU_044089_2_1_9"/>
<dbReference type="OrthoDB" id="9772604at2"/>
<dbReference type="Proteomes" id="UP000001417">
    <property type="component" value="Chromosome"/>
</dbReference>
<dbReference type="GO" id="GO:0005737">
    <property type="term" value="C:cytoplasm"/>
    <property type="evidence" value="ECO:0007669"/>
    <property type="project" value="UniProtKB-SubCell"/>
</dbReference>
<dbReference type="GO" id="GO:0051539">
    <property type="term" value="F:4 iron, 4 sulfur cluster binding"/>
    <property type="evidence" value="ECO:0007669"/>
    <property type="project" value="UniProtKB-UniRule"/>
</dbReference>
<dbReference type="GO" id="GO:0043866">
    <property type="term" value="F:adenylyl-sulfate reductase (thioredoxin) activity"/>
    <property type="evidence" value="ECO:0007669"/>
    <property type="project" value="UniProtKB-EC"/>
</dbReference>
<dbReference type="GO" id="GO:0046872">
    <property type="term" value="F:metal ion binding"/>
    <property type="evidence" value="ECO:0007669"/>
    <property type="project" value="UniProtKB-KW"/>
</dbReference>
<dbReference type="GO" id="GO:0004604">
    <property type="term" value="F:phosphoadenylyl-sulfate reductase (thioredoxin) activity"/>
    <property type="evidence" value="ECO:0000318"/>
    <property type="project" value="GO_Central"/>
</dbReference>
<dbReference type="GO" id="GO:0019344">
    <property type="term" value="P:cysteine biosynthetic process"/>
    <property type="evidence" value="ECO:0007669"/>
    <property type="project" value="InterPro"/>
</dbReference>
<dbReference type="GO" id="GO:0070814">
    <property type="term" value="P:hydrogen sulfide biosynthetic process"/>
    <property type="evidence" value="ECO:0007669"/>
    <property type="project" value="UniProtKB-UniRule"/>
</dbReference>
<dbReference type="GO" id="GO:0019379">
    <property type="term" value="P:sulfate assimilation, phosphoadenylyl sulfate reduction by phosphoadenylyl-sulfate reductase (thioredoxin)"/>
    <property type="evidence" value="ECO:0000318"/>
    <property type="project" value="GO_Central"/>
</dbReference>
<dbReference type="CDD" id="cd23945">
    <property type="entry name" value="PAPS_reductase"/>
    <property type="match status" value="1"/>
</dbReference>
<dbReference type="FunFam" id="3.40.50.620:FF:000095">
    <property type="entry name" value="Phosphoadenosine phosphosulfate reductase"/>
    <property type="match status" value="1"/>
</dbReference>
<dbReference type="Gene3D" id="3.40.50.620">
    <property type="entry name" value="HUPs"/>
    <property type="match status" value="1"/>
</dbReference>
<dbReference type="HAMAP" id="MF_00063">
    <property type="entry name" value="CysH"/>
    <property type="match status" value="1"/>
</dbReference>
<dbReference type="InterPro" id="IPR011798">
    <property type="entry name" value="APS_reductase"/>
</dbReference>
<dbReference type="InterPro" id="IPR004511">
    <property type="entry name" value="PAPS/APS_Rdtase"/>
</dbReference>
<dbReference type="InterPro" id="IPR002500">
    <property type="entry name" value="PAPS_reduct_dom"/>
</dbReference>
<dbReference type="InterPro" id="IPR014729">
    <property type="entry name" value="Rossmann-like_a/b/a_fold"/>
</dbReference>
<dbReference type="NCBIfam" id="TIGR02055">
    <property type="entry name" value="APS_reductase"/>
    <property type="match status" value="1"/>
</dbReference>
<dbReference type="NCBIfam" id="TIGR00434">
    <property type="entry name" value="cysH"/>
    <property type="match status" value="1"/>
</dbReference>
<dbReference type="NCBIfam" id="NF002537">
    <property type="entry name" value="PRK02090.1"/>
    <property type="match status" value="1"/>
</dbReference>
<dbReference type="PANTHER" id="PTHR46509">
    <property type="entry name" value="PHOSPHOADENOSINE PHOSPHOSULFATE REDUCTASE"/>
    <property type="match status" value="1"/>
</dbReference>
<dbReference type="PANTHER" id="PTHR46509:SF1">
    <property type="entry name" value="PHOSPHOADENOSINE PHOSPHOSULFATE REDUCTASE"/>
    <property type="match status" value="1"/>
</dbReference>
<dbReference type="Pfam" id="PF01507">
    <property type="entry name" value="PAPS_reduct"/>
    <property type="match status" value="1"/>
</dbReference>
<dbReference type="PIRSF" id="PIRSF000857">
    <property type="entry name" value="PAPS_reductase"/>
    <property type="match status" value="1"/>
</dbReference>
<dbReference type="SUPFAM" id="SSF52402">
    <property type="entry name" value="Adenine nucleotide alpha hydrolases-like"/>
    <property type="match status" value="1"/>
</dbReference>
<feature type="chain" id="PRO_0000100624" description="Adenosine 5'-phosphosulfate reductase">
    <location>
        <begin position="1"/>
        <end position="234"/>
    </location>
</feature>
<feature type="active site" description="Nucleophile; cysteine thiosulfonate intermediate" evidence="1">
    <location>
        <position position="229"/>
    </location>
</feature>
<feature type="binding site" evidence="1">
    <location>
        <position position="120"/>
    </location>
    <ligand>
        <name>[4Fe-4S] cluster</name>
        <dbReference type="ChEBI" id="CHEBI:49883"/>
    </ligand>
</feature>
<feature type="binding site" evidence="1">
    <location>
        <position position="121"/>
    </location>
    <ligand>
        <name>[4Fe-4S] cluster</name>
        <dbReference type="ChEBI" id="CHEBI:49883"/>
    </ligand>
</feature>
<feature type="binding site" evidence="1">
    <location>
        <position position="203"/>
    </location>
    <ligand>
        <name>[4Fe-4S] cluster</name>
        <dbReference type="ChEBI" id="CHEBI:49883"/>
    </ligand>
</feature>
<feature type="binding site" evidence="1">
    <location>
        <position position="206"/>
    </location>
    <ligand>
        <name>[4Fe-4S] cluster</name>
        <dbReference type="ChEBI" id="CHEBI:49883"/>
    </ligand>
</feature>
<accession>Q81FZ1</accession>
<name>CYSH_BACCR</name>
<sequence>MLTYETWEENVVSFSEEDETKGALSVLNWAYKEYKDEVVYACSFGVEGMVLLHIINQVNPSAKVVFLDTNVHFQETYELIRKVRERFPSLNIIEKQPELTLDEQAKLHGEKLWESNPNLCCKIRKILPLEKSLVVEKAWISGLRREQSETRKHTKFINQDHRFQSIKVCPLIHWTWKEVWRYVYKHSLPYNPLHDVGYPSIGCEKCTLPVGDGGDSRDGRWAGKVKTECGLHYQ</sequence>
<evidence type="ECO:0000255" key="1">
    <source>
        <dbReference type="HAMAP-Rule" id="MF_00063"/>
    </source>
</evidence>
<organism>
    <name type="scientific">Bacillus cereus (strain ATCC 14579 / DSM 31 / CCUG 7414 / JCM 2152 / NBRC 15305 / NCIMB 9373 / NCTC 2599 / NRRL B-3711)</name>
    <dbReference type="NCBI Taxonomy" id="226900"/>
    <lineage>
        <taxon>Bacteria</taxon>
        <taxon>Bacillati</taxon>
        <taxon>Bacillota</taxon>
        <taxon>Bacilli</taxon>
        <taxon>Bacillales</taxon>
        <taxon>Bacillaceae</taxon>
        <taxon>Bacillus</taxon>
        <taxon>Bacillus cereus group</taxon>
    </lineage>
</organism>
<keyword id="KW-0963">Cytoplasm</keyword>
<keyword id="KW-0408">Iron</keyword>
<keyword id="KW-0411">Iron-sulfur</keyword>
<keyword id="KW-0479">Metal-binding</keyword>
<keyword id="KW-0560">Oxidoreductase</keyword>
<keyword id="KW-1185">Reference proteome</keyword>
<proteinExistence type="inferred from homology"/>
<protein>
    <recommendedName>
        <fullName evidence="1">Adenosine 5'-phosphosulfate reductase</fullName>
        <shortName evidence="1">APS reductase</shortName>
        <ecNumber evidence="1">1.8.4.10</ecNumber>
    </recommendedName>
    <alternativeName>
        <fullName evidence="1">5'-adenylylsulfate reductase</fullName>
    </alternativeName>
    <alternativeName>
        <fullName evidence="1">Thioredoxin-dependent 5'-adenylylsulfate reductase</fullName>
    </alternativeName>
</protein>
<gene>
    <name evidence="1" type="primary">cysH</name>
    <name type="ordered locus">BC_1421</name>
</gene>